<name>RS15_SALCH</name>
<organism>
    <name type="scientific">Salmonella choleraesuis (strain SC-B67)</name>
    <dbReference type="NCBI Taxonomy" id="321314"/>
    <lineage>
        <taxon>Bacteria</taxon>
        <taxon>Pseudomonadati</taxon>
        <taxon>Pseudomonadota</taxon>
        <taxon>Gammaproteobacteria</taxon>
        <taxon>Enterobacterales</taxon>
        <taxon>Enterobacteriaceae</taxon>
        <taxon>Salmonella</taxon>
    </lineage>
</organism>
<protein>
    <recommendedName>
        <fullName evidence="1">Small ribosomal subunit protein uS15</fullName>
    </recommendedName>
    <alternativeName>
        <fullName evidence="2">30S ribosomal protein S15</fullName>
    </alternativeName>
</protein>
<accession>Q57JI2</accession>
<gene>
    <name evidence="1" type="primary">rpsO</name>
    <name type="ordered locus">SCH_3224</name>
</gene>
<dbReference type="EMBL" id="AE017220">
    <property type="protein sequence ID" value="AAX67130.1"/>
    <property type="molecule type" value="Genomic_DNA"/>
</dbReference>
<dbReference type="RefSeq" id="WP_000059465.1">
    <property type="nucleotide sequence ID" value="NC_006905.1"/>
</dbReference>
<dbReference type="SMR" id="Q57JI2"/>
<dbReference type="GeneID" id="93035884"/>
<dbReference type="KEGG" id="sec:SCH_3224"/>
<dbReference type="HOGENOM" id="CLU_148518_0_0_6"/>
<dbReference type="Proteomes" id="UP000000538">
    <property type="component" value="Chromosome"/>
</dbReference>
<dbReference type="GO" id="GO:0022627">
    <property type="term" value="C:cytosolic small ribosomal subunit"/>
    <property type="evidence" value="ECO:0007669"/>
    <property type="project" value="TreeGrafter"/>
</dbReference>
<dbReference type="GO" id="GO:0019843">
    <property type="term" value="F:rRNA binding"/>
    <property type="evidence" value="ECO:0007669"/>
    <property type="project" value="UniProtKB-UniRule"/>
</dbReference>
<dbReference type="GO" id="GO:0003735">
    <property type="term" value="F:structural constituent of ribosome"/>
    <property type="evidence" value="ECO:0007669"/>
    <property type="project" value="InterPro"/>
</dbReference>
<dbReference type="GO" id="GO:0006412">
    <property type="term" value="P:translation"/>
    <property type="evidence" value="ECO:0007669"/>
    <property type="project" value="UniProtKB-UniRule"/>
</dbReference>
<dbReference type="CDD" id="cd00353">
    <property type="entry name" value="Ribosomal_S15p_S13e"/>
    <property type="match status" value="1"/>
</dbReference>
<dbReference type="FunFam" id="1.10.287.10:FF:000002">
    <property type="entry name" value="30S ribosomal protein S15"/>
    <property type="match status" value="1"/>
</dbReference>
<dbReference type="Gene3D" id="6.10.250.3130">
    <property type="match status" value="1"/>
</dbReference>
<dbReference type="Gene3D" id="1.10.287.10">
    <property type="entry name" value="S15/NS1, RNA-binding"/>
    <property type="match status" value="1"/>
</dbReference>
<dbReference type="HAMAP" id="MF_01343_B">
    <property type="entry name" value="Ribosomal_uS15_B"/>
    <property type="match status" value="1"/>
</dbReference>
<dbReference type="InterPro" id="IPR000589">
    <property type="entry name" value="Ribosomal_uS15"/>
</dbReference>
<dbReference type="InterPro" id="IPR005290">
    <property type="entry name" value="Ribosomal_uS15_bac-type"/>
</dbReference>
<dbReference type="InterPro" id="IPR009068">
    <property type="entry name" value="uS15_NS1_RNA-bd_sf"/>
</dbReference>
<dbReference type="NCBIfam" id="TIGR00952">
    <property type="entry name" value="S15_bact"/>
    <property type="match status" value="1"/>
</dbReference>
<dbReference type="PANTHER" id="PTHR23321">
    <property type="entry name" value="RIBOSOMAL PROTEIN S15, BACTERIAL AND ORGANELLAR"/>
    <property type="match status" value="1"/>
</dbReference>
<dbReference type="PANTHER" id="PTHR23321:SF26">
    <property type="entry name" value="SMALL RIBOSOMAL SUBUNIT PROTEIN US15M"/>
    <property type="match status" value="1"/>
</dbReference>
<dbReference type="Pfam" id="PF00312">
    <property type="entry name" value="Ribosomal_S15"/>
    <property type="match status" value="1"/>
</dbReference>
<dbReference type="SMART" id="SM01387">
    <property type="entry name" value="Ribosomal_S15"/>
    <property type="match status" value="1"/>
</dbReference>
<dbReference type="SUPFAM" id="SSF47060">
    <property type="entry name" value="S15/NS1 RNA-binding domain"/>
    <property type="match status" value="1"/>
</dbReference>
<dbReference type="PROSITE" id="PS00362">
    <property type="entry name" value="RIBOSOMAL_S15"/>
    <property type="match status" value="1"/>
</dbReference>
<feature type="chain" id="PRO_0000115529" description="Small ribosomal subunit protein uS15">
    <location>
        <begin position="1"/>
        <end position="89"/>
    </location>
</feature>
<reference key="1">
    <citation type="journal article" date="2005" name="Nucleic Acids Res.">
        <title>The genome sequence of Salmonella enterica serovar Choleraesuis, a highly invasive and resistant zoonotic pathogen.</title>
        <authorList>
            <person name="Chiu C.-H."/>
            <person name="Tang P."/>
            <person name="Chu C."/>
            <person name="Hu S."/>
            <person name="Bao Q."/>
            <person name="Yu J."/>
            <person name="Chou Y.-Y."/>
            <person name="Wang H.-S."/>
            <person name="Lee Y.-S."/>
        </authorList>
    </citation>
    <scope>NUCLEOTIDE SEQUENCE [LARGE SCALE GENOMIC DNA]</scope>
    <source>
        <strain>SC-B67</strain>
    </source>
</reference>
<evidence type="ECO:0000255" key="1">
    <source>
        <dbReference type="HAMAP-Rule" id="MF_01343"/>
    </source>
</evidence>
<evidence type="ECO:0000305" key="2"/>
<comment type="function">
    <text evidence="1">One of the primary rRNA binding proteins, it binds directly to 16S rRNA where it helps nucleate assembly of the platform of the 30S subunit by binding and bridging several RNA helices of the 16S rRNA.</text>
</comment>
<comment type="function">
    <text evidence="1">Forms an intersubunit bridge (bridge B4) with the 23S rRNA of the 50S subunit in the ribosome.</text>
</comment>
<comment type="subunit">
    <text evidence="1">Part of the 30S ribosomal subunit. Forms a bridge to the 50S subunit in the 70S ribosome, contacting the 23S rRNA.</text>
</comment>
<comment type="similarity">
    <text evidence="1">Belongs to the universal ribosomal protein uS15 family.</text>
</comment>
<proteinExistence type="inferred from homology"/>
<keyword id="KW-0687">Ribonucleoprotein</keyword>
<keyword id="KW-0689">Ribosomal protein</keyword>
<keyword id="KW-0694">RNA-binding</keyword>
<keyword id="KW-0699">rRNA-binding</keyword>
<sequence>MSLSTEATAKIVSEFGRDANDTGSTDVQVALLTAQINHLQGHFAEHKKDHHSRRGLLRMVSQRRKLLDYLKRKDVARYTALIERLGLRR</sequence>